<dbReference type="EMBL" id="CP000814">
    <property type="protein sequence ID" value="ABV52046.1"/>
    <property type="molecule type" value="Genomic_DNA"/>
</dbReference>
<dbReference type="RefSeq" id="WP_002779452.1">
    <property type="nucleotide sequence ID" value="NC_009839.1"/>
</dbReference>
<dbReference type="SMR" id="A8FKQ9"/>
<dbReference type="GeneID" id="66544517"/>
<dbReference type="KEGG" id="cju:C8J_0447"/>
<dbReference type="HOGENOM" id="CLU_074237_2_0_7"/>
<dbReference type="GO" id="GO:0022625">
    <property type="term" value="C:cytosolic large ribosomal subunit"/>
    <property type="evidence" value="ECO:0007669"/>
    <property type="project" value="TreeGrafter"/>
</dbReference>
<dbReference type="GO" id="GO:0070180">
    <property type="term" value="F:large ribosomal subunit rRNA binding"/>
    <property type="evidence" value="ECO:0007669"/>
    <property type="project" value="UniProtKB-UniRule"/>
</dbReference>
<dbReference type="GO" id="GO:0003735">
    <property type="term" value="F:structural constituent of ribosome"/>
    <property type="evidence" value="ECO:0007669"/>
    <property type="project" value="InterPro"/>
</dbReference>
<dbReference type="GO" id="GO:0006412">
    <property type="term" value="P:translation"/>
    <property type="evidence" value="ECO:0007669"/>
    <property type="project" value="UniProtKB-UniRule"/>
</dbReference>
<dbReference type="CDD" id="cd00349">
    <property type="entry name" value="Ribosomal_L11"/>
    <property type="match status" value="1"/>
</dbReference>
<dbReference type="FunFam" id="1.10.10.250:FF:000001">
    <property type="entry name" value="50S ribosomal protein L11"/>
    <property type="match status" value="1"/>
</dbReference>
<dbReference type="FunFam" id="3.30.1550.10:FF:000001">
    <property type="entry name" value="50S ribosomal protein L11"/>
    <property type="match status" value="1"/>
</dbReference>
<dbReference type="Gene3D" id="1.10.10.250">
    <property type="entry name" value="Ribosomal protein L11, C-terminal domain"/>
    <property type="match status" value="1"/>
</dbReference>
<dbReference type="Gene3D" id="3.30.1550.10">
    <property type="entry name" value="Ribosomal protein L11/L12, N-terminal domain"/>
    <property type="match status" value="1"/>
</dbReference>
<dbReference type="HAMAP" id="MF_00736">
    <property type="entry name" value="Ribosomal_uL11"/>
    <property type="match status" value="1"/>
</dbReference>
<dbReference type="InterPro" id="IPR000911">
    <property type="entry name" value="Ribosomal_uL11"/>
</dbReference>
<dbReference type="InterPro" id="IPR006519">
    <property type="entry name" value="Ribosomal_uL11_bac-typ"/>
</dbReference>
<dbReference type="InterPro" id="IPR020783">
    <property type="entry name" value="Ribosomal_uL11_C"/>
</dbReference>
<dbReference type="InterPro" id="IPR036769">
    <property type="entry name" value="Ribosomal_uL11_C_sf"/>
</dbReference>
<dbReference type="InterPro" id="IPR020785">
    <property type="entry name" value="Ribosomal_uL11_CS"/>
</dbReference>
<dbReference type="InterPro" id="IPR020784">
    <property type="entry name" value="Ribosomal_uL11_N"/>
</dbReference>
<dbReference type="InterPro" id="IPR036796">
    <property type="entry name" value="Ribosomal_uL11_N_sf"/>
</dbReference>
<dbReference type="NCBIfam" id="TIGR01632">
    <property type="entry name" value="L11_bact"/>
    <property type="match status" value="1"/>
</dbReference>
<dbReference type="PANTHER" id="PTHR11661">
    <property type="entry name" value="60S RIBOSOMAL PROTEIN L12"/>
    <property type="match status" value="1"/>
</dbReference>
<dbReference type="PANTHER" id="PTHR11661:SF1">
    <property type="entry name" value="LARGE RIBOSOMAL SUBUNIT PROTEIN UL11M"/>
    <property type="match status" value="1"/>
</dbReference>
<dbReference type="Pfam" id="PF00298">
    <property type="entry name" value="Ribosomal_L11"/>
    <property type="match status" value="1"/>
</dbReference>
<dbReference type="Pfam" id="PF03946">
    <property type="entry name" value="Ribosomal_L11_N"/>
    <property type="match status" value="1"/>
</dbReference>
<dbReference type="SMART" id="SM00649">
    <property type="entry name" value="RL11"/>
    <property type="match status" value="1"/>
</dbReference>
<dbReference type="SUPFAM" id="SSF54747">
    <property type="entry name" value="Ribosomal L11/L12e N-terminal domain"/>
    <property type="match status" value="1"/>
</dbReference>
<dbReference type="SUPFAM" id="SSF46906">
    <property type="entry name" value="Ribosomal protein L11, C-terminal domain"/>
    <property type="match status" value="1"/>
</dbReference>
<dbReference type="PROSITE" id="PS00359">
    <property type="entry name" value="RIBOSOMAL_L11"/>
    <property type="match status" value="1"/>
</dbReference>
<name>RL11_CAMJ8</name>
<gene>
    <name evidence="1" type="primary">rplK</name>
    <name type="ordered locus">C8J_0447</name>
</gene>
<keyword id="KW-0488">Methylation</keyword>
<keyword id="KW-0687">Ribonucleoprotein</keyword>
<keyword id="KW-0689">Ribosomal protein</keyword>
<keyword id="KW-0694">RNA-binding</keyword>
<keyword id="KW-0699">rRNA-binding</keyword>
<organism>
    <name type="scientific">Campylobacter jejuni subsp. jejuni serotype O:6 (strain 81116 / NCTC 11828)</name>
    <dbReference type="NCBI Taxonomy" id="407148"/>
    <lineage>
        <taxon>Bacteria</taxon>
        <taxon>Pseudomonadati</taxon>
        <taxon>Campylobacterota</taxon>
        <taxon>Epsilonproteobacteria</taxon>
        <taxon>Campylobacterales</taxon>
        <taxon>Campylobacteraceae</taxon>
        <taxon>Campylobacter</taxon>
    </lineage>
</organism>
<sequence>MAKKVVGEIKLQIAATKANPSPPVGPALGQQGVNIMEFCKAFNERTKDMAGFNIPVVITVYADKSFTFITKQPPATDLIKKAAGISKGTDNPLKNKVGKLTRAQVLEIVDKKIADLNTKDRDQAAKIIAGSARSMGVEIVD</sequence>
<accession>A8FKQ9</accession>
<proteinExistence type="inferred from homology"/>
<feature type="chain" id="PRO_1000072799" description="Large ribosomal subunit protein uL11">
    <location>
        <begin position="1"/>
        <end position="141"/>
    </location>
</feature>
<protein>
    <recommendedName>
        <fullName evidence="1">Large ribosomal subunit protein uL11</fullName>
    </recommendedName>
    <alternativeName>
        <fullName evidence="2">50S ribosomal protein L11</fullName>
    </alternativeName>
</protein>
<comment type="function">
    <text evidence="1">Forms part of the ribosomal stalk which helps the ribosome interact with GTP-bound translation factors.</text>
</comment>
<comment type="subunit">
    <text evidence="1">Part of the ribosomal stalk of the 50S ribosomal subunit. Interacts with L10 and the large rRNA to form the base of the stalk. L10 forms an elongated spine to which L12 dimers bind in a sequential fashion forming a multimeric L10(L12)X complex.</text>
</comment>
<comment type="PTM">
    <text evidence="1">One or more lysine residues are methylated.</text>
</comment>
<comment type="similarity">
    <text evidence="1">Belongs to the universal ribosomal protein uL11 family.</text>
</comment>
<reference key="1">
    <citation type="journal article" date="2007" name="J. Bacteriol.">
        <title>The complete genome sequence of Campylobacter jejuni strain 81116 (NCTC11828).</title>
        <authorList>
            <person name="Pearson B.M."/>
            <person name="Gaskin D.J.H."/>
            <person name="Segers R.P.A.M."/>
            <person name="Wells J.M."/>
            <person name="Nuijten P.J.M."/>
            <person name="van Vliet A.H.M."/>
        </authorList>
    </citation>
    <scope>NUCLEOTIDE SEQUENCE [LARGE SCALE GENOMIC DNA]</scope>
    <source>
        <strain>81116 / NCTC 11828</strain>
    </source>
</reference>
<evidence type="ECO:0000255" key="1">
    <source>
        <dbReference type="HAMAP-Rule" id="MF_00736"/>
    </source>
</evidence>
<evidence type="ECO:0000305" key="2"/>